<organism>
    <name type="scientific">Brucella melitensis biotype 1 (strain ATCC 23456 / CCUG 17765 / NCTC 10094 / 16M)</name>
    <dbReference type="NCBI Taxonomy" id="224914"/>
    <lineage>
        <taxon>Bacteria</taxon>
        <taxon>Pseudomonadati</taxon>
        <taxon>Pseudomonadota</taxon>
        <taxon>Alphaproteobacteria</taxon>
        <taxon>Hyphomicrobiales</taxon>
        <taxon>Brucellaceae</taxon>
        <taxon>Brucella/Ochrobactrum group</taxon>
        <taxon>Brucella</taxon>
    </lineage>
</organism>
<protein>
    <recommendedName>
        <fullName evidence="1">Phosphatidylglycerol--prolipoprotein diacylglyceryl transferase</fullName>
        <ecNumber evidence="1">2.5.1.145</ecNumber>
    </recommendedName>
</protein>
<dbReference type="EC" id="2.5.1.145" evidence="1"/>
<dbReference type="EMBL" id="AE008917">
    <property type="protein sequence ID" value="AAL51669.1"/>
    <property type="molecule type" value="Genomic_DNA"/>
</dbReference>
<dbReference type="PIR" id="AB3313">
    <property type="entry name" value="AB3313"/>
</dbReference>
<dbReference type="RefSeq" id="WP_002966912.1">
    <property type="nucleotide sequence ID" value="NZ_GG703780.1"/>
</dbReference>
<dbReference type="SMR" id="Q8YIF6"/>
<dbReference type="GeneID" id="97533286"/>
<dbReference type="KEGG" id="bme:BMEI0488"/>
<dbReference type="KEGG" id="bmel:DK63_934"/>
<dbReference type="PATRIC" id="fig|224914.52.peg.987"/>
<dbReference type="eggNOG" id="COG0682">
    <property type="taxonomic scope" value="Bacteria"/>
</dbReference>
<dbReference type="PhylomeDB" id="Q8YIF6"/>
<dbReference type="UniPathway" id="UPA00664"/>
<dbReference type="Proteomes" id="UP000000419">
    <property type="component" value="Chromosome I"/>
</dbReference>
<dbReference type="GO" id="GO:0005886">
    <property type="term" value="C:plasma membrane"/>
    <property type="evidence" value="ECO:0007669"/>
    <property type="project" value="UniProtKB-SubCell"/>
</dbReference>
<dbReference type="GO" id="GO:0008961">
    <property type="term" value="F:phosphatidylglycerol-prolipoprotein diacylglyceryl transferase activity"/>
    <property type="evidence" value="ECO:0007669"/>
    <property type="project" value="UniProtKB-UniRule"/>
</dbReference>
<dbReference type="GO" id="GO:0042158">
    <property type="term" value="P:lipoprotein biosynthetic process"/>
    <property type="evidence" value="ECO:0007669"/>
    <property type="project" value="UniProtKB-UniRule"/>
</dbReference>
<dbReference type="HAMAP" id="MF_01147">
    <property type="entry name" value="Lgt"/>
    <property type="match status" value="1"/>
</dbReference>
<dbReference type="InterPro" id="IPR001640">
    <property type="entry name" value="Lgt"/>
</dbReference>
<dbReference type="NCBIfam" id="TIGR00544">
    <property type="entry name" value="lgt"/>
    <property type="match status" value="1"/>
</dbReference>
<dbReference type="PANTHER" id="PTHR30589:SF0">
    <property type="entry name" value="PHOSPHATIDYLGLYCEROL--PROLIPOPROTEIN DIACYLGLYCERYL TRANSFERASE"/>
    <property type="match status" value="1"/>
</dbReference>
<dbReference type="PANTHER" id="PTHR30589">
    <property type="entry name" value="PROLIPOPROTEIN DIACYLGLYCERYL TRANSFERASE"/>
    <property type="match status" value="1"/>
</dbReference>
<dbReference type="Pfam" id="PF01790">
    <property type="entry name" value="LGT"/>
    <property type="match status" value="1"/>
</dbReference>
<name>LGT_BRUME</name>
<evidence type="ECO:0000255" key="1">
    <source>
        <dbReference type="HAMAP-Rule" id="MF_01147"/>
    </source>
</evidence>
<sequence>MIETLLPASALAFPAIDPVIFRVGPLAVHWYGLGYVVGILFAWWYGKKLLRSHRLWANNQPPMAPEALDDFVIWAALGVVLGGRIGYVLFYNFSYYISNPLAIPALWDGGMSFHGGILGTTLAMILFARSRGILVWSMFDTIAAGVPIGLGVVRVANFINSELWGRVSDVPWAVYFPNGGPLPRHPSQLYEAFLEGLVLFFVLFVLVWGARKLKQPGFVAGAFVTGYGLSRIAVEFFREPDAQIGYLFGGWLTMGMVLSVPMVLLGLWAMWRANRAAARNA</sequence>
<feature type="chain" id="PRO_0000172568" description="Phosphatidylglycerol--prolipoprotein diacylglyceryl transferase">
    <location>
        <begin position="1"/>
        <end position="281"/>
    </location>
</feature>
<feature type="transmembrane region" description="Helical" evidence="1">
    <location>
        <begin position="23"/>
        <end position="43"/>
    </location>
</feature>
<feature type="transmembrane region" description="Helical" evidence="1">
    <location>
        <begin position="71"/>
        <end position="91"/>
    </location>
</feature>
<feature type="transmembrane region" description="Helical" evidence="1">
    <location>
        <begin position="107"/>
        <end position="127"/>
    </location>
</feature>
<feature type="transmembrane region" description="Helical" evidence="1">
    <location>
        <begin position="133"/>
        <end position="153"/>
    </location>
</feature>
<feature type="transmembrane region" description="Helical" evidence="1">
    <location>
        <begin position="189"/>
        <end position="209"/>
    </location>
</feature>
<feature type="transmembrane region" description="Helical" evidence="1">
    <location>
        <begin position="217"/>
        <end position="237"/>
    </location>
</feature>
<feature type="transmembrane region" description="Helical" evidence="1">
    <location>
        <begin position="247"/>
        <end position="267"/>
    </location>
</feature>
<feature type="binding site" evidence="1">
    <location>
        <position position="154"/>
    </location>
    <ligand>
        <name>a 1,2-diacyl-sn-glycero-3-phospho-(1'-sn-glycerol)</name>
        <dbReference type="ChEBI" id="CHEBI:64716"/>
    </ligand>
</feature>
<reference key="1">
    <citation type="journal article" date="2002" name="Proc. Natl. Acad. Sci. U.S.A.">
        <title>The genome sequence of the facultative intracellular pathogen Brucella melitensis.</title>
        <authorList>
            <person name="DelVecchio V.G."/>
            <person name="Kapatral V."/>
            <person name="Redkar R.J."/>
            <person name="Patra G."/>
            <person name="Mujer C."/>
            <person name="Los T."/>
            <person name="Ivanova N."/>
            <person name="Anderson I."/>
            <person name="Bhattacharyya A."/>
            <person name="Lykidis A."/>
            <person name="Reznik G."/>
            <person name="Jablonski L."/>
            <person name="Larsen N."/>
            <person name="D'Souza M."/>
            <person name="Bernal A."/>
            <person name="Mazur M."/>
            <person name="Goltsman E."/>
            <person name="Selkov E."/>
            <person name="Elzer P.H."/>
            <person name="Hagius S."/>
            <person name="O'Callaghan D."/>
            <person name="Letesson J.-J."/>
            <person name="Haselkorn R."/>
            <person name="Kyrpides N.C."/>
            <person name="Overbeek R."/>
        </authorList>
    </citation>
    <scope>NUCLEOTIDE SEQUENCE [LARGE SCALE GENOMIC DNA]</scope>
    <source>
        <strain>ATCC 23456 / CCUG 17765 / NCTC 10094 / 16M</strain>
    </source>
</reference>
<gene>
    <name evidence="1" type="primary">lgt</name>
    <name type="ordered locus">BMEI0488</name>
</gene>
<accession>Q8YIF6</accession>
<comment type="function">
    <text evidence="1">Catalyzes the transfer of the diacylglyceryl group from phosphatidylglycerol to the sulfhydryl group of the N-terminal cysteine of a prolipoprotein, the first step in the formation of mature lipoproteins.</text>
</comment>
<comment type="catalytic activity">
    <reaction evidence="1">
        <text>L-cysteinyl-[prolipoprotein] + a 1,2-diacyl-sn-glycero-3-phospho-(1'-sn-glycerol) = an S-1,2-diacyl-sn-glyceryl-L-cysteinyl-[prolipoprotein] + sn-glycerol 1-phosphate + H(+)</text>
        <dbReference type="Rhea" id="RHEA:56712"/>
        <dbReference type="Rhea" id="RHEA-COMP:14679"/>
        <dbReference type="Rhea" id="RHEA-COMP:14680"/>
        <dbReference type="ChEBI" id="CHEBI:15378"/>
        <dbReference type="ChEBI" id="CHEBI:29950"/>
        <dbReference type="ChEBI" id="CHEBI:57685"/>
        <dbReference type="ChEBI" id="CHEBI:64716"/>
        <dbReference type="ChEBI" id="CHEBI:140658"/>
        <dbReference type="EC" id="2.5.1.145"/>
    </reaction>
</comment>
<comment type="pathway">
    <text evidence="1">Protein modification; lipoprotein biosynthesis (diacylglyceryl transfer).</text>
</comment>
<comment type="subcellular location">
    <subcellularLocation>
        <location evidence="1">Cell inner membrane</location>
        <topology evidence="1">Multi-pass membrane protein</topology>
    </subcellularLocation>
</comment>
<comment type="similarity">
    <text evidence="1">Belongs to the Lgt family.</text>
</comment>
<keyword id="KW-0997">Cell inner membrane</keyword>
<keyword id="KW-1003">Cell membrane</keyword>
<keyword id="KW-0472">Membrane</keyword>
<keyword id="KW-0808">Transferase</keyword>
<keyword id="KW-0812">Transmembrane</keyword>
<keyword id="KW-1133">Transmembrane helix</keyword>
<proteinExistence type="inferred from homology"/>